<comment type="function">
    <text evidence="2">Transcriptional activator of the cysJI operon which is involved in sulfur assimilation. Also negatively regulates its own transcription.</text>
</comment>
<comment type="induction">
    <text evidence="2">Negatively autoregulated.</text>
</comment>
<comment type="disruption phenotype">
    <text evidence="2">Cannot grow on sulfate, sulfite or butanesulfonate as sole sulfur source.</text>
</comment>
<comment type="similarity">
    <text evidence="3">Belongs to the LysR transcriptional regulatory family.</text>
</comment>
<feature type="chain" id="PRO_0000105824" description="HTH-type transcriptional regulator CysL">
    <location>
        <begin position="1"/>
        <end position="299"/>
    </location>
</feature>
<feature type="domain" description="HTH lysR-type" evidence="1">
    <location>
        <begin position="1"/>
        <end position="58"/>
    </location>
</feature>
<feature type="DNA-binding region" description="H-T-H motif" evidence="1">
    <location>
        <begin position="18"/>
        <end position="37"/>
    </location>
</feature>
<sequence length="299" mass="34190">MYYDVLKTFIAVVEEKNFTKAAEKLMISQPSVSLHIKNLEKEFQTALLNRSPKHFTTTPTGDILYQRAKQMVFLYEQAKAEIYAHHHYVKGELKIAASFTIGEYILPPLLAQLQKLYPELNLDVMIGNTEEVSERVRMLQADIGLIEGHTNENELEIEPFMEDEMCIAAPNQHPLAGRKEISISDLQNEAWVTREKGSGTREYLDHVLSSNGLRPKSMFTISSNQGVKEAVINGMGLSVLSRSVLRKDLIHREISILHINNFSLKRKLSYIHSPLMENTKNKEIFITMLKSNYQSQLLK</sequence>
<name>CYSL_BACSU</name>
<gene>
    <name type="primary">cysL</name>
    <name type="synonym">ywfK</name>
    <name type="ordered locus">BSU37650</name>
    <name type="ORF">ipa-89d</name>
</gene>
<proteinExistence type="evidence at protein level"/>
<dbReference type="EMBL" id="X73124">
    <property type="protein sequence ID" value="CAA51645.1"/>
    <property type="molecule type" value="Genomic_DNA"/>
</dbReference>
<dbReference type="EMBL" id="AL009126">
    <property type="protein sequence ID" value="CAB15792.1"/>
    <property type="molecule type" value="Genomic_DNA"/>
</dbReference>
<dbReference type="PIR" id="S39744">
    <property type="entry name" value="S39744"/>
</dbReference>
<dbReference type="RefSeq" id="NP_391645.1">
    <property type="nucleotide sequence ID" value="NC_000964.3"/>
</dbReference>
<dbReference type="RefSeq" id="WP_003243173.1">
    <property type="nucleotide sequence ID" value="NZ_OZ025638.1"/>
</dbReference>
<dbReference type="SMR" id="P39647"/>
<dbReference type="FunCoup" id="P39647">
    <property type="interactions" value="283"/>
</dbReference>
<dbReference type="STRING" id="224308.BSU37650"/>
<dbReference type="PaxDb" id="224308-BSU37650"/>
<dbReference type="DNASU" id="936502"/>
<dbReference type="EnsemblBacteria" id="CAB15792">
    <property type="protein sequence ID" value="CAB15792"/>
    <property type="gene ID" value="BSU_37650"/>
</dbReference>
<dbReference type="GeneID" id="936502"/>
<dbReference type="KEGG" id="bsu:BSU37650"/>
<dbReference type="PATRIC" id="fig|224308.179.peg.4077"/>
<dbReference type="eggNOG" id="COG0583">
    <property type="taxonomic scope" value="Bacteria"/>
</dbReference>
<dbReference type="InParanoid" id="P39647"/>
<dbReference type="OrthoDB" id="9785745at2"/>
<dbReference type="PhylomeDB" id="P39647"/>
<dbReference type="BioCyc" id="BSUB:BSU37650-MONOMER"/>
<dbReference type="Proteomes" id="UP000001570">
    <property type="component" value="Chromosome"/>
</dbReference>
<dbReference type="GO" id="GO:0003700">
    <property type="term" value="F:DNA-binding transcription factor activity"/>
    <property type="evidence" value="ECO:0007669"/>
    <property type="project" value="InterPro"/>
</dbReference>
<dbReference type="GO" id="GO:0000976">
    <property type="term" value="F:transcription cis-regulatory region binding"/>
    <property type="evidence" value="ECO:0000318"/>
    <property type="project" value="GO_Central"/>
</dbReference>
<dbReference type="GO" id="GO:0006355">
    <property type="term" value="P:regulation of DNA-templated transcription"/>
    <property type="evidence" value="ECO:0000318"/>
    <property type="project" value="GO_Central"/>
</dbReference>
<dbReference type="CDD" id="cd08420">
    <property type="entry name" value="PBP2_CysL_like"/>
    <property type="match status" value="1"/>
</dbReference>
<dbReference type="FunFam" id="1.10.10.10:FF:000001">
    <property type="entry name" value="LysR family transcriptional regulator"/>
    <property type="match status" value="1"/>
</dbReference>
<dbReference type="Gene3D" id="3.40.190.290">
    <property type="match status" value="1"/>
</dbReference>
<dbReference type="Gene3D" id="1.10.10.10">
    <property type="entry name" value="Winged helix-like DNA-binding domain superfamily/Winged helix DNA-binding domain"/>
    <property type="match status" value="1"/>
</dbReference>
<dbReference type="InterPro" id="IPR005119">
    <property type="entry name" value="LysR_subst-bd"/>
</dbReference>
<dbReference type="InterPro" id="IPR000847">
    <property type="entry name" value="Tscrpt_reg_HTH_LysR"/>
</dbReference>
<dbReference type="InterPro" id="IPR036388">
    <property type="entry name" value="WH-like_DNA-bd_sf"/>
</dbReference>
<dbReference type="InterPro" id="IPR036390">
    <property type="entry name" value="WH_DNA-bd_sf"/>
</dbReference>
<dbReference type="PANTHER" id="PTHR30126">
    <property type="entry name" value="HTH-TYPE TRANSCRIPTIONAL REGULATOR"/>
    <property type="match status" value="1"/>
</dbReference>
<dbReference type="PANTHER" id="PTHR30126:SF39">
    <property type="entry name" value="HTH-TYPE TRANSCRIPTIONAL REGULATOR CYSL"/>
    <property type="match status" value="1"/>
</dbReference>
<dbReference type="Pfam" id="PF00126">
    <property type="entry name" value="HTH_1"/>
    <property type="match status" value="1"/>
</dbReference>
<dbReference type="Pfam" id="PF03466">
    <property type="entry name" value="LysR_substrate"/>
    <property type="match status" value="1"/>
</dbReference>
<dbReference type="PRINTS" id="PR00039">
    <property type="entry name" value="HTHLYSR"/>
</dbReference>
<dbReference type="SUPFAM" id="SSF53850">
    <property type="entry name" value="Periplasmic binding protein-like II"/>
    <property type="match status" value="1"/>
</dbReference>
<dbReference type="SUPFAM" id="SSF46785">
    <property type="entry name" value="Winged helix' DNA-binding domain"/>
    <property type="match status" value="1"/>
</dbReference>
<dbReference type="PROSITE" id="PS50931">
    <property type="entry name" value="HTH_LYSR"/>
    <property type="match status" value="1"/>
</dbReference>
<evidence type="ECO:0000255" key="1">
    <source>
        <dbReference type="PROSITE-ProRule" id="PRU00253"/>
    </source>
</evidence>
<evidence type="ECO:0000269" key="2">
    <source>
    </source>
</evidence>
<evidence type="ECO:0000305" key="3"/>
<protein>
    <recommendedName>
        <fullName>HTH-type transcriptional regulator CysL</fullName>
    </recommendedName>
    <alternativeName>
        <fullName>CysJI operon transcriptional activator</fullName>
    </alternativeName>
</protein>
<accession>P39647</accession>
<reference key="1">
    <citation type="journal article" date="1993" name="Mol. Microbiol.">
        <title>Bacillus subtilis genome project: cloning and sequencing of the 97 kb region from 325 degrees to 333 degrees.</title>
        <authorList>
            <person name="Glaser P."/>
            <person name="Kunst F."/>
            <person name="Arnaud M."/>
            <person name="Coudart M.P."/>
            <person name="Gonzales W."/>
            <person name="Hullo M.-F."/>
            <person name="Ionescu M."/>
            <person name="Lubochinsky B."/>
            <person name="Marcelino L."/>
            <person name="Moszer I."/>
            <person name="Presecan E."/>
            <person name="Santana M."/>
            <person name="Schneider E."/>
            <person name="Schweizer J."/>
            <person name="Vertes A."/>
            <person name="Rapoport G."/>
            <person name="Danchin A."/>
        </authorList>
    </citation>
    <scope>NUCLEOTIDE SEQUENCE [GENOMIC DNA]</scope>
    <source>
        <strain>168</strain>
    </source>
</reference>
<reference key="2">
    <citation type="journal article" date="1997" name="Nature">
        <title>The complete genome sequence of the Gram-positive bacterium Bacillus subtilis.</title>
        <authorList>
            <person name="Kunst F."/>
            <person name="Ogasawara N."/>
            <person name="Moszer I."/>
            <person name="Albertini A.M."/>
            <person name="Alloni G."/>
            <person name="Azevedo V."/>
            <person name="Bertero M.G."/>
            <person name="Bessieres P."/>
            <person name="Bolotin A."/>
            <person name="Borchert S."/>
            <person name="Borriss R."/>
            <person name="Boursier L."/>
            <person name="Brans A."/>
            <person name="Braun M."/>
            <person name="Brignell S.C."/>
            <person name="Bron S."/>
            <person name="Brouillet S."/>
            <person name="Bruschi C.V."/>
            <person name="Caldwell B."/>
            <person name="Capuano V."/>
            <person name="Carter N.M."/>
            <person name="Choi S.-K."/>
            <person name="Codani J.-J."/>
            <person name="Connerton I.F."/>
            <person name="Cummings N.J."/>
            <person name="Daniel R.A."/>
            <person name="Denizot F."/>
            <person name="Devine K.M."/>
            <person name="Duesterhoeft A."/>
            <person name="Ehrlich S.D."/>
            <person name="Emmerson P.T."/>
            <person name="Entian K.-D."/>
            <person name="Errington J."/>
            <person name="Fabret C."/>
            <person name="Ferrari E."/>
            <person name="Foulger D."/>
            <person name="Fritz C."/>
            <person name="Fujita M."/>
            <person name="Fujita Y."/>
            <person name="Fuma S."/>
            <person name="Galizzi A."/>
            <person name="Galleron N."/>
            <person name="Ghim S.-Y."/>
            <person name="Glaser P."/>
            <person name="Goffeau A."/>
            <person name="Golightly E.J."/>
            <person name="Grandi G."/>
            <person name="Guiseppi G."/>
            <person name="Guy B.J."/>
            <person name="Haga K."/>
            <person name="Haiech J."/>
            <person name="Harwood C.R."/>
            <person name="Henaut A."/>
            <person name="Hilbert H."/>
            <person name="Holsappel S."/>
            <person name="Hosono S."/>
            <person name="Hullo M.-F."/>
            <person name="Itaya M."/>
            <person name="Jones L.-M."/>
            <person name="Joris B."/>
            <person name="Karamata D."/>
            <person name="Kasahara Y."/>
            <person name="Klaerr-Blanchard M."/>
            <person name="Klein C."/>
            <person name="Kobayashi Y."/>
            <person name="Koetter P."/>
            <person name="Koningstein G."/>
            <person name="Krogh S."/>
            <person name="Kumano M."/>
            <person name="Kurita K."/>
            <person name="Lapidus A."/>
            <person name="Lardinois S."/>
            <person name="Lauber J."/>
            <person name="Lazarevic V."/>
            <person name="Lee S.-M."/>
            <person name="Levine A."/>
            <person name="Liu H."/>
            <person name="Masuda S."/>
            <person name="Mauel C."/>
            <person name="Medigue C."/>
            <person name="Medina N."/>
            <person name="Mellado R.P."/>
            <person name="Mizuno M."/>
            <person name="Moestl D."/>
            <person name="Nakai S."/>
            <person name="Noback M."/>
            <person name="Noone D."/>
            <person name="O'Reilly M."/>
            <person name="Ogawa K."/>
            <person name="Ogiwara A."/>
            <person name="Oudega B."/>
            <person name="Park S.-H."/>
            <person name="Parro V."/>
            <person name="Pohl T.M."/>
            <person name="Portetelle D."/>
            <person name="Porwollik S."/>
            <person name="Prescott A.M."/>
            <person name="Presecan E."/>
            <person name="Pujic P."/>
            <person name="Purnelle B."/>
            <person name="Rapoport G."/>
            <person name="Rey M."/>
            <person name="Reynolds S."/>
            <person name="Rieger M."/>
            <person name="Rivolta C."/>
            <person name="Rocha E."/>
            <person name="Roche B."/>
            <person name="Rose M."/>
            <person name="Sadaie Y."/>
            <person name="Sato T."/>
            <person name="Scanlan E."/>
            <person name="Schleich S."/>
            <person name="Schroeter R."/>
            <person name="Scoffone F."/>
            <person name="Sekiguchi J."/>
            <person name="Sekowska A."/>
            <person name="Seror S.J."/>
            <person name="Serror P."/>
            <person name="Shin B.-S."/>
            <person name="Soldo B."/>
            <person name="Sorokin A."/>
            <person name="Tacconi E."/>
            <person name="Takagi T."/>
            <person name="Takahashi H."/>
            <person name="Takemaru K."/>
            <person name="Takeuchi M."/>
            <person name="Tamakoshi A."/>
            <person name="Tanaka T."/>
            <person name="Terpstra P."/>
            <person name="Tognoni A."/>
            <person name="Tosato V."/>
            <person name="Uchiyama S."/>
            <person name="Vandenbol M."/>
            <person name="Vannier F."/>
            <person name="Vassarotti A."/>
            <person name="Viari A."/>
            <person name="Wambutt R."/>
            <person name="Wedler E."/>
            <person name="Wedler H."/>
            <person name="Weitzenegger T."/>
            <person name="Winters P."/>
            <person name="Wipat A."/>
            <person name="Yamamoto H."/>
            <person name="Yamane K."/>
            <person name="Yasumoto K."/>
            <person name="Yata K."/>
            <person name="Yoshida K."/>
            <person name="Yoshikawa H.-F."/>
            <person name="Zumstein E."/>
            <person name="Yoshikawa H."/>
            <person name="Danchin A."/>
        </authorList>
    </citation>
    <scope>NUCLEOTIDE SEQUENCE [LARGE SCALE GENOMIC DNA]</scope>
    <source>
        <strain>168</strain>
    </source>
</reference>
<reference key="3">
    <citation type="journal article" date="2002" name="J. Bacteriol.">
        <title>Identification of Bacillus subtilis CysL, a regulator of the cysJI operon, which encodes sulfite reductase.</title>
        <authorList>
            <person name="Guillouard I."/>
            <person name="Auger S."/>
            <person name="Hullo M.-F."/>
            <person name="Chetouani F."/>
            <person name="Danchin A."/>
            <person name="Martin-Verstraete I."/>
        </authorList>
    </citation>
    <scope>FUNCTION AS A REPRESSOR OF SULFUR ASSIMILATION</scope>
    <scope>DISRUPTION PHENOTYPE</scope>
    <scope>INDUCTION</scope>
    <source>
        <strain>168</strain>
    </source>
</reference>
<keyword id="KW-0010">Activator</keyword>
<keyword id="KW-0238">DNA-binding</keyword>
<keyword id="KW-1185">Reference proteome</keyword>
<keyword id="KW-0678">Repressor</keyword>
<keyword id="KW-0804">Transcription</keyword>
<keyword id="KW-0805">Transcription regulation</keyword>
<organism>
    <name type="scientific">Bacillus subtilis (strain 168)</name>
    <dbReference type="NCBI Taxonomy" id="224308"/>
    <lineage>
        <taxon>Bacteria</taxon>
        <taxon>Bacillati</taxon>
        <taxon>Bacillota</taxon>
        <taxon>Bacilli</taxon>
        <taxon>Bacillales</taxon>
        <taxon>Bacillaceae</taxon>
        <taxon>Bacillus</taxon>
    </lineage>
</organism>